<keyword id="KW-0004">4Fe-4S</keyword>
<keyword id="KW-0408">Iron</keyword>
<keyword id="KW-0411">Iron-sulfur</keyword>
<keyword id="KW-0414">Isoprene biosynthesis</keyword>
<keyword id="KW-0479">Metal-binding</keyword>
<keyword id="KW-0560">Oxidoreductase</keyword>
<organism>
    <name type="scientific">Pectobacterium carotovorum subsp. carotovorum (strain PC1)</name>
    <dbReference type="NCBI Taxonomy" id="561230"/>
    <lineage>
        <taxon>Bacteria</taxon>
        <taxon>Pseudomonadati</taxon>
        <taxon>Pseudomonadota</taxon>
        <taxon>Gammaproteobacteria</taxon>
        <taxon>Enterobacterales</taxon>
        <taxon>Pectobacteriaceae</taxon>
        <taxon>Pectobacterium</taxon>
    </lineage>
</organism>
<gene>
    <name evidence="1" type="primary">ispH</name>
    <name type="ordered locus">PC1_3650</name>
</gene>
<accession>C6DF01</accession>
<evidence type="ECO:0000255" key="1">
    <source>
        <dbReference type="HAMAP-Rule" id="MF_00191"/>
    </source>
</evidence>
<feature type="chain" id="PRO_1000204009" description="4-hydroxy-3-methylbut-2-enyl diphosphate reductase">
    <location>
        <begin position="1"/>
        <end position="316"/>
    </location>
</feature>
<feature type="active site" description="Proton donor" evidence="1">
    <location>
        <position position="126"/>
    </location>
</feature>
<feature type="binding site" evidence="1">
    <location>
        <position position="12"/>
    </location>
    <ligand>
        <name>[4Fe-4S] cluster</name>
        <dbReference type="ChEBI" id="CHEBI:49883"/>
    </ligand>
</feature>
<feature type="binding site" evidence="1">
    <location>
        <position position="41"/>
    </location>
    <ligand>
        <name>(2E)-4-hydroxy-3-methylbut-2-enyl diphosphate</name>
        <dbReference type="ChEBI" id="CHEBI:128753"/>
    </ligand>
</feature>
<feature type="binding site" evidence="1">
    <location>
        <position position="41"/>
    </location>
    <ligand>
        <name>dimethylallyl diphosphate</name>
        <dbReference type="ChEBI" id="CHEBI:57623"/>
    </ligand>
</feature>
<feature type="binding site" evidence="1">
    <location>
        <position position="41"/>
    </location>
    <ligand>
        <name>isopentenyl diphosphate</name>
        <dbReference type="ChEBI" id="CHEBI:128769"/>
    </ligand>
</feature>
<feature type="binding site" evidence="1">
    <location>
        <position position="74"/>
    </location>
    <ligand>
        <name>(2E)-4-hydroxy-3-methylbut-2-enyl diphosphate</name>
        <dbReference type="ChEBI" id="CHEBI:128753"/>
    </ligand>
</feature>
<feature type="binding site" evidence="1">
    <location>
        <position position="74"/>
    </location>
    <ligand>
        <name>dimethylallyl diphosphate</name>
        <dbReference type="ChEBI" id="CHEBI:57623"/>
    </ligand>
</feature>
<feature type="binding site" evidence="1">
    <location>
        <position position="74"/>
    </location>
    <ligand>
        <name>isopentenyl diphosphate</name>
        <dbReference type="ChEBI" id="CHEBI:128769"/>
    </ligand>
</feature>
<feature type="binding site" evidence="1">
    <location>
        <position position="96"/>
    </location>
    <ligand>
        <name>[4Fe-4S] cluster</name>
        <dbReference type="ChEBI" id="CHEBI:49883"/>
    </ligand>
</feature>
<feature type="binding site" evidence="1">
    <location>
        <position position="124"/>
    </location>
    <ligand>
        <name>(2E)-4-hydroxy-3-methylbut-2-enyl diphosphate</name>
        <dbReference type="ChEBI" id="CHEBI:128753"/>
    </ligand>
</feature>
<feature type="binding site" evidence="1">
    <location>
        <position position="124"/>
    </location>
    <ligand>
        <name>dimethylallyl diphosphate</name>
        <dbReference type="ChEBI" id="CHEBI:57623"/>
    </ligand>
</feature>
<feature type="binding site" evidence="1">
    <location>
        <position position="124"/>
    </location>
    <ligand>
        <name>isopentenyl diphosphate</name>
        <dbReference type="ChEBI" id="CHEBI:128769"/>
    </ligand>
</feature>
<feature type="binding site" evidence="1">
    <location>
        <position position="167"/>
    </location>
    <ligand>
        <name>(2E)-4-hydroxy-3-methylbut-2-enyl diphosphate</name>
        <dbReference type="ChEBI" id="CHEBI:128753"/>
    </ligand>
</feature>
<feature type="binding site" evidence="1">
    <location>
        <position position="197"/>
    </location>
    <ligand>
        <name>[4Fe-4S] cluster</name>
        <dbReference type="ChEBI" id="CHEBI:49883"/>
    </ligand>
</feature>
<feature type="binding site" evidence="1">
    <location>
        <position position="225"/>
    </location>
    <ligand>
        <name>(2E)-4-hydroxy-3-methylbut-2-enyl diphosphate</name>
        <dbReference type="ChEBI" id="CHEBI:128753"/>
    </ligand>
</feature>
<feature type="binding site" evidence="1">
    <location>
        <position position="225"/>
    </location>
    <ligand>
        <name>dimethylallyl diphosphate</name>
        <dbReference type="ChEBI" id="CHEBI:57623"/>
    </ligand>
</feature>
<feature type="binding site" evidence="1">
    <location>
        <position position="225"/>
    </location>
    <ligand>
        <name>isopentenyl diphosphate</name>
        <dbReference type="ChEBI" id="CHEBI:128769"/>
    </ligand>
</feature>
<feature type="binding site" evidence="1">
    <location>
        <position position="226"/>
    </location>
    <ligand>
        <name>(2E)-4-hydroxy-3-methylbut-2-enyl diphosphate</name>
        <dbReference type="ChEBI" id="CHEBI:128753"/>
    </ligand>
</feature>
<feature type="binding site" evidence="1">
    <location>
        <position position="226"/>
    </location>
    <ligand>
        <name>dimethylallyl diphosphate</name>
        <dbReference type="ChEBI" id="CHEBI:57623"/>
    </ligand>
</feature>
<feature type="binding site" evidence="1">
    <location>
        <position position="226"/>
    </location>
    <ligand>
        <name>isopentenyl diphosphate</name>
        <dbReference type="ChEBI" id="CHEBI:128769"/>
    </ligand>
</feature>
<feature type="binding site" evidence="1">
    <location>
        <position position="227"/>
    </location>
    <ligand>
        <name>(2E)-4-hydroxy-3-methylbut-2-enyl diphosphate</name>
        <dbReference type="ChEBI" id="CHEBI:128753"/>
    </ligand>
</feature>
<feature type="binding site" evidence="1">
    <location>
        <position position="227"/>
    </location>
    <ligand>
        <name>dimethylallyl diphosphate</name>
        <dbReference type="ChEBI" id="CHEBI:57623"/>
    </ligand>
</feature>
<feature type="binding site" evidence="1">
    <location>
        <position position="227"/>
    </location>
    <ligand>
        <name>isopentenyl diphosphate</name>
        <dbReference type="ChEBI" id="CHEBI:128769"/>
    </ligand>
</feature>
<feature type="binding site" evidence="1">
    <location>
        <position position="269"/>
    </location>
    <ligand>
        <name>(2E)-4-hydroxy-3-methylbut-2-enyl diphosphate</name>
        <dbReference type="ChEBI" id="CHEBI:128753"/>
    </ligand>
</feature>
<feature type="binding site" evidence="1">
    <location>
        <position position="269"/>
    </location>
    <ligand>
        <name>dimethylallyl diphosphate</name>
        <dbReference type="ChEBI" id="CHEBI:57623"/>
    </ligand>
</feature>
<feature type="binding site" evidence="1">
    <location>
        <position position="269"/>
    </location>
    <ligand>
        <name>isopentenyl diphosphate</name>
        <dbReference type="ChEBI" id="CHEBI:128769"/>
    </ligand>
</feature>
<reference key="1">
    <citation type="submission" date="2009-07" db="EMBL/GenBank/DDBJ databases">
        <title>Complete sequence of Pectobacterium carotovorum subsp. carotovorum PC1.</title>
        <authorList>
            <consortium name="US DOE Joint Genome Institute"/>
            <person name="Lucas S."/>
            <person name="Copeland A."/>
            <person name="Lapidus A."/>
            <person name="Glavina del Rio T."/>
            <person name="Tice H."/>
            <person name="Bruce D."/>
            <person name="Goodwin L."/>
            <person name="Pitluck S."/>
            <person name="Munk A.C."/>
            <person name="Brettin T."/>
            <person name="Detter J.C."/>
            <person name="Han C."/>
            <person name="Tapia R."/>
            <person name="Larimer F."/>
            <person name="Land M."/>
            <person name="Hauser L."/>
            <person name="Kyrpides N."/>
            <person name="Mikhailova N."/>
            <person name="Balakrishnan V."/>
            <person name="Glasner J."/>
            <person name="Perna N.T."/>
        </authorList>
    </citation>
    <scope>NUCLEOTIDE SEQUENCE [LARGE SCALE GENOMIC DNA]</scope>
    <source>
        <strain>PC1</strain>
    </source>
</reference>
<sequence>MQILLANPRGFCAGVDRAISIVERALELFGTPIYVRHEVVHNRYVVNGLRERGAIFIEQIEDVPDGAILIFSAHGVSQAVRNEAKSRDLTVFDATCPLVTKVHMEVARASKKGIEAILIGHAGHPEVEGTMGQYSNADGGMYLVESPEDVWQLQVKDESNLCFMTQTTLSVDDTYAVIDALRERFPQIVGPRKDDICYATTNRQEAVRHLSDKADVVFVVGSKNSSNSNRLAELAQRAGKAAYLIDSAEDIQESWVEGASHVGVTAGASAPDILVQQVIQRLKALGGKVAVEMQGREENIVFEVPKELRVEVKQVD</sequence>
<comment type="function">
    <text evidence="1">Catalyzes the conversion of 1-hydroxy-2-methyl-2-(E)-butenyl 4-diphosphate (HMBPP) into a mixture of isopentenyl diphosphate (IPP) and dimethylallyl diphosphate (DMAPP). Acts in the terminal step of the DOXP/MEP pathway for isoprenoid precursor biosynthesis.</text>
</comment>
<comment type="catalytic activity">
    <reaction evidence="1">
        <text>isopentenyl diphosphate + 2 oxidized [2Fe-2S]-[ferredoxin] + H2O = (2E)-4-hydroxy-3-methylbut-2-enyl diphosphate + 2 reduced [2Fe-2S]-[ferredoxin] + 2 H(+)</text>
        <dbReference type="Rhea" id="RHEA:24488"/>
        <dbReference type="Rhea" id="RHEA-COMP:10000"/>
        <dbReference type="Rhea" id="RHEA-COMP:10001"/>
        <dbReference type="ChEBI" id="CHEBI:15377"/>
        <dbReference type="ChEBI" id="CHEBI:15378"/>
        <dbReference type="ChEBI" id="CHEBI:33737"/>
        <dbReference type="ChEBI" id="CHEBI:33738"/>
        <dbReference type="ChEBI" id="CHEBI:128753"/>
        <dbReference type="ChEBI" id="CHEBI:128769"/>
        <dbReference type="EC" id="1.17.7.4"/>
    </reaction>
</comment>
<comment type="catalytic activity">
    <reaction evidence="1">
        <text>dimethylallyl diphosphate + 2 oxidized [2Fe-2S]-[ferredoxin] + H2O = (2E)-4-hydroxy-3-methylbut-2-enyl diphosphate + 2 reduced [2Fe-2S]-[ferredoxin] + 2 H(+)</text>
        <dbReference type="Rhea" id="RHEA:24825"/>
        <dbReference type="Rhea" id="RHEA-COMP:10000"/>
        <dbReference type="Rhea" id="RHEA-COMP:10001"/>
        <dbReference type="ChEBI" id="CHEBI:15377"/>
        <dbReference type="ChEBI" id="CHEBI:15378"/>
        <dbReference type="ChEBI" id="CHEBI:33737"/>
        <dbReference type="ChEBI" id="CHEBI:33738"/>
        <dbReference type="ChEBI" id="CHEBI:57623"/>
        <dbReference type="ChEBI" id="CHEBI:128753"/>
        <dbReference type="EC" id="1.17.7.4"/>
    </reaction>
</comment>
<comment type="cofactor">
    <cofactor evidence="1">
        <name>[4Fe-4S] cluster</name>
        <dbReference type="ChEBI" id="CHEBI:49883"/>
    </cofactor>
    <text evidence="1">Binds 1 [4Fe-4S] cluster per subunit.</text>
</comment>
<comment type="pathway">
    <text evidence="1">Isoprenoid biosynthesis; dimethylallyl diphosphate biosynthesis; dimethylallyl diphosphate from (2E)-4-hydroxy-3-methylbutenyl diphosphate: step 1/1.</text>
</comment>
<comment type="pathway">
    <text evidence="1">Isoprenoid biosynthesis; isopentenyl diphosphate biosynthesis via DXP pathway; isopentenyl diphosphate from 1-deoxy-D-xylulose 5-phosphate: step 6/6.</text>
</comment>
<comment type="subunit">
    <text evidence="1">Homodimer.</text>
</comment>
<comment type="similarity">
    <text evidence="1">Belongs to the IspH family.</text>
</comment>
<dbReference type="EC" id="1.17.7.4" evidence="1"/>
<dbReference type="EMBL" id="CP001657">
    <property type="protein sequence ID" value="ACT14665.1"/>
    <property type="molecule type" value="Genomic_DNA"/>
</dbReference>
<dbReference type="RefSeq" id="WP_015841781.1">
    <property type="nucleotide sequence ID" value="NC_012917.1"/>
</dbReference>
<dbReference type="SMR" id="C6DF01"/>
<dbReference type="STRING" id="561230.PC1_3650"/>
<dbReference type="KEGG" id="pct:PC1_3650"/>
<dbReference type="eggNOG" id="COG0761">
    <property type="taxonomic scope" value="Bacteria"/>
</dbReference>
<dbReference type="HOGENOM" id="CLU_027486_1_1_6"/>
<dbReference type="OrthoDB" id="9804068at2"/>
<dbReference type="UniPathway" id="UPA00056">
    <property type="reaction ID" value="UER00097"/>
</dbReference>
<dbReference type="UniPathway" id="UPA00059">
    <property type="reaction ID" value="UER00105"/>
</dbReference>
<dbReference type="Proteomes" id="UP000002736">
    <property type="component" value="Chromosome"/>
</dbReference>
<dbReference type="GO" id="GO:0051539">
    <property type="term" value="F:4 iron, 4 sulfur cluster binding"/>
    <property type="evidence" value="ECO:0007669"/>
    <property type="project" value="UniProtKB-UniRule"/>
</dbReference>
<dbReference type="GO" id="GO:0051745">
    <property type="term" value="F:4-hydroxy-3-methylbut-2-enyl diphosphate reductase activity"/>
    <property type="evidence" value="ECO:0007669"/>
    <property type="project" value="UniProtKB-UniRule"/>
</dbReference>
<dbReference type="GO" id="GO:0046872">
    <property type="term" value="F:metal ion binding"/>
    <property type="evidence" value="ECO:0007669"/>
    <property type="project" value="UniProtKB-KW"/>
</dbReference>
<dbReference type="GO" id="GO:0050992">
    <property type="term" value="P:dimethylallyl diphosphate biosynthetic process"/>
    <property type="evidence" value="ECO:0007669"/>
    <property type="project" value="UniProtKB-UniRule"/>
</dbReference>
<dbReference type="GO" id="GO:0019288">
    <property type="term" value="P:isopentenyl diphosphate biosynthetic process, methylerythritol 4-phosphate pathway"/>
    <property type="evidence" value="ECO:0007669"/>
    <property type="project" value="UniProtKB-UniRule"/>
</dbReference>
<dbReference type="GO" id="GO:0016114">
    <property type="term" value="P:terpenoid biosynthetic process"/>
    <property type="evidence" value="ECO:0007669"/>
    <property type="project" value="UniProtKB-UniRule"/>
</dbReference>
<dbReference type="CDD" id="cd13944">
    <property type="entry name" value="lytB_ispH"/>
    <property type="match status" value="1"/>
</dbReference>
<dbReference type="FunFam" id="3.40.50.11270:FF:000001">
    <property type="entry name" value="4-hydroxy-3-methylbut-2-enyl diphosphate reductase"/>
    <property type="match status" value="1"/>
</dbReference>
<dbReference type="Gene3D" id="3.40.50.11270">
    <property type="match status" value="1"/>
</dbReference>
<dbReference type="Gene3D" id="3.40.1010.20">
    <property type="entry name" value="4-hydroxy-3-methylbut-2-enyl diphosphate reductase, catalytic domain"/>
    <property type="match status" value="2"/>
</dbReference>
<dbReference type="HAMAP" id="MF_00191">
    <property type="entry name" value="IspH"/>
    <property type="match status" value="1"/>
</dbReference>
<dbReference type="InterPro" id="IPR003451">
    <property type="entry name" value="LytB/IspH"/>
</dbReference>
<dbReference type="NCBIfam" id="TIGR00216">
    <property type="entry name" value="ispH_lytB"/>
    <property type="match status" value="1"/>
</dbReference>
<dbReference type="NCBIfam" id="NF002188">
    <property type="entry name" value="PRK01045.1-2"/>
    <property type="match status" value="1"/>
</dbReference>
<dbReference type="NCBIfam" id="NF002190">
    <property type="entry name" value="PRK01045.1-4"/>
    <property type="match status" value="1"/>
</dbReference>
<dbReference type="PANTHER" id="PTHR30426">
    <property type="entry name" value="4-HYDROXY-3-METHYLBUT-2-ENYL DIPHOSPHATE REDUCTASE"/>
    <property type="match status" value="1"/>
</dbReference>
<dbReference type="PANTHER" id="PTHR30426:SF0">
    <property type="entry name" value="4-HYDROXY-3-METHYLBUT-2-ENYL DIPHOSPHATE REDUCTASE"/>
    <property type="match status" value="1"/>
</dbReference>
<dbReference type="Pfam" id="PF02401">
    <property type="entry name" value="LYTB"/>
    <property type="match status" value="1"/>
</dbReference>
<protein>
    <recommendedName>
        <fullName evidence="1">4-hydroxy-3-methylbut-2-enyl diphosphate reductase</fullName>
        <shortName evidence="1">HMBPP reductase</shortName>
        <ecNumber evidence="1">1.17.7.4</ecNumber>
    </recommendedName>
</protein>
<proteinExistence type="inferred from homology"/>
<name>ISPH_PECCP</name>